<dbReference type="EMBL" id="U00096">
    <property type="protein sequence ID" value="AAC75445.1"/>
    <property type="molecule type" value="Genomic_DNA"/>
</dbReference>
<dbReference type="EMBL" id="AP009048">
    <property type="protein sequence ID" value="BAA16256.1"/>
    <property type="molecule type" value="Genomic_DNA"/>
</dbReference>
<dbReference type="PIR" id="G65012">
    <property type="entry name" value="G65012"/>
</dbReference>
<dbReference type="RefSeq" id="NP_416887.1">
    <property type="nucleotide sequence ID" value="NC_000913.3"/>
</dbReference>
<dbReference type="RefSeq" id="WP_000985359.1">
    <property type="nucleotide sequence ID" value="NZ_LN832404.1"/>
</dbReference>
<dbReference type="BioGRID" id="4260562">
    <property type="interactions" value="9"/>
</dbReference>
<dbReference type="FunCoup" id="P77579">
    <property type="interactions" value="30"/>
</dbReference>
<dbReference type="STRING" id="511145.b2386"/>
<dbReference type="TCDB" id="4.A.2.1.11">
    <property type="family name" value="the pts fructose-mannitol (fru) family"/>
</dbReference>
<dbReference type="PaxDb" id="511145-b2386"/>
<dbReference type="EnsemblBacteria" id="AAC75445">
    <property type="protein sequence ID" value="AAC75445"/>
    <property type="gene ID" value="b2386"/>
</dbReference>
<dbReference type="GeneID" id="949111"/>
<dbReference type="KEGG" id="ecj:JW2383"/>
<dbReference type="KEGG" id="eco:b2386"/>
<dbReference type="KEGG" id="ecoc:C3026_13265"/>
<dbReference type="PATRIC" id="fig|1411691.4.peg.4342"/>
<dbReference type="EchoBASE" id="EB3906"/>
<dbReference type="eggNOG" id="COG1299">
    <property type="taxonomic scope" value="Bacteria"/>
</dbReference>
<dbReference type="HOGENOM" id="CLU_013155_0_2_6"/>
<dbReference type="InParanoid" id="P77579"/>
<dbReference type="OMA" id="QIMMAAI"/>
<dbReference type="OrthoDB" id="9782569at2"/>
<dbReference type="PhylomeDB" id="P77579"/>
<dbReference type="BioCyc" id="EcoCyc:MONOMER0-6"/>
<dbReference type="PRO" id="PR:P77579"/>
<dbReference type="Proteomes" id="UP000000625">
    <property type="component" value="Chromosome"/>
</dbReference>
<dbReference type="GO" id="GO:0005886">
    <property type="term" value="C:plasma membrane"/>
    <property type="evidence" value="ECO:0000314"/>
    <property type="project" value="EcoCyc"/>
</dbReference>
<dbReference type="GO" id="GO:0008982">
    <property type="term" value="F:protein-N(PI)-phosphohistidine-sugar phosphotransferase activity"/>
    <property type="evidence" value="ECO:0007669"/>
    <property type="project" value="InterPro"/>
</dbReference>
<dbReference type="GO" id="GO:0090563">
    <property type="term" value="F:protein-phosphocysteine-sugar phosphotransferase activity"/>
    <property type="evidence" value="ECO:0000318"/>
    <property type="project" value="GO_Central"/>
</dbReference>
<dbReference type="GO" id="GO:0009401">
    <property type="term" value="P:phosphoenolpyruvate-dependent sugar phosphotransferase system"/>
    <property type="evidence" value="ECO:0000247"/>
    <property type="project" value="EcoCyc"/>
</dbReference>
<dbReference type="InterPro" id="IPR050864">
    <property type="entry name" value="Bacterial_PTS_Sugar_Transport"/>
</dbReference>
<dbReference type="InterPro" id="IPR003352">
    <property type="entry name" value="PTS_EIIC"/>
</dbReference>
<dbReference type="InterPro" id="IPR013014">
    <property type="entry name" value="PTS_EIIC_2"/>
</dbReference>
<dbReference type="PANTHER" id="PTHR30505">
    <property type="entry name" value="FRUCTOSE-LIKE PERMEASE"/>
    <property type="match status" value="1"/>
</dbReference>
<dbReference type="PANTHER" id="PTHR30505:SF0">
    <property type="entry name" value="FRUCTOSE-LIKE PTS SYSTEM EIIBC COMPONENT-RELATED"/>
    <property type="match status" value="1"/>
</dbReference>
<dbReference type="Pfam" id="PF02378">
    <property type="entry name" value="PTS_EIIC"/>
    <property type="match status" value="1"/>
</dbReference>
<dbReference type="PROSITE" id="PS51104">
    <property type="entry name" value="PTS_EIIC_TYPE_2"/>
    <property type="match status" value="1"/>
</dbReference>
<name>PTFC1_ECOLI</name>
<feature type="chain" id="PRO_0000186704" description="Fructose-like permease IIC component 1">
    <location>
        <begin position="1"/>
        <end position="415"/>
    </location>
</feature>
<feature type="topological domain" description="Cytoplasmic" evidence="2">
    <location>
        <begin position="1"/>
        <end position="46"/>
    </location>
</feature>
<feature type="transmembrane region" description="Helical" evidence="3">
    <location>
        <begin position="47"/>
        <end position="67"/>
    </location>
</feature>
<feature type="topological domain" description="Periplasmic" evidence="2">
    <location>
        <begin position="68"/>
        <end position="101"/>
    </location>
</feature>
<feature type="transmembrane region" description="Helical" evidence="3">
    <location>
        <begin position="102"/>
        <end position="122"/>
    </location>
</feature>
<feature type="topological domain" description="Cytoplasmic" evidence="2">
    <location>
        <begin position="123"/>
        <end position="126"/>
    </location>
</feature>
<feature type="transmembrane region" description="Helical" evidence="3">
    <location>
        <begin position="127"/>
        <end position="147"/>
    </location>
</feature>
<feature type="topological domain" description="Periplasmic" evidence="2">
    <location>
        <begin position="148"/>
        <end position="157"/>
    </location>
</feature>
<feature type="transmembrane region" description="Helical" evidence="3">
    <location>
        <begin position="158"/>
        <end position="178"/>
    </location>
</feature>
<feature type="topological domain" description="Cytoplasmic" evidence="2">
    <location>
        <begin position="179"/>
        <end position="197"/>
    </location>
</feature>
<feature type="transmembrane region" description="Helical" evidence="3">
    <location>
        <begin position="198"/>
        <end position="218"/>
    </location>
</feature>
<feature type="topological domain" description="Periplasmic" evidence="2">
    <location>
        <begin position="219"/>
        <end position="237"/>
    </location>
</feature>
<feature type="transmembrane region" description="Helical" evidence="3">
    <location>
        <begin position="238"/>
        <end position="258"/>
    </location>
</feature>
<feature type="topological domain" description="Cytoplasmic" evidence="2">
    <location>
        <begin position="259"/>
        <end position="276"/>
    </location>
</feature>
<feature type="transmembrane region" description="Helical" evidence="3">
    <location>
        <begin position="277"/>
        <end position="297"/>
    </location>
</feature>
<feature type="topological domain" description="Periplasmic" evidence="2">
    <location>
        <begin position="298"/>
        <end position="318"/>
    </location>
</feature>
<feature type="transmembrane region" description="Helical" evidence="3">
    <location>
        <begin position="319"/>
        <end position="339"/>
    </location>
</feature>
<feature type="topological domain" description="Cytoplasmic" evidence="2">
    <location>
        <begin position="340"/>
        <end position="341"/>
    </location>
</feature>
<feature type="transmembrane region" description="Helical" evidence="3">
    <location>
        <begin position="342"/>
        <end position="362"/>
    </location>
</feature>
<feature type="topological domain" description="Periplasmic" evidence="2">
    <location>
        <begin position="363"/>
        <end position="378"/>
    </location>
</feature>
<feature type="transmembrane region" description="Helical" evidence="3">
    <location>
        <begin position="379"/>
        <end position="399"/>
    </location>
</feature>
<feature type="topological domain" description="Cytoplasmic" evidence="2">
    <location>
        <begin position="400"/>
        <end position="415"/>
    </location>
</feature>
<feature type="domain" description="PTS EIIC type-2" evidence="3">
    <location>
        <begin position="35"/>
        <end position="410"/>
    </location>
</feature>
<gene>
    <name type="primary">fryC</name>
    <name type="synonym">ypdG</name>
    <name type="ordered locus">b2386</name>
    <name type="ordered locus">JW2383</name>
</gene>
<accession>P77579</accession>
<accession>P78196</accession>
<evidence type="ECO:0000250" key="1"/>
<evidence type="ECO:0000255" key="2"/>
<evidence type="ECO:0000255" key="3">
    <source>
        <dbReference type="PROSITE-ProRule" id="PRU00427"/>
    </source>
</evidence>
<keyword id="KW-0997">Cell inner membrane</keyword>
<keyword id="KW-1003">Cell membrane</keyword>
<keyword id="KW-0472">Membrane</keyword>
<keyword id="KW-0597">Phosphoprotein</keyword>
<keyword id="KW-0598">Phosphotransferase system</keyword>
<keyword id="KW-1185">Reference proteome</keyword>
<keyword id="KW-0762">Sugar transport</keyword>
<keyword id="KW-0808">Transferase</keyword>
<keyword id="KW-0812">Transmembrane</keyword>
<keyword id="KW-1133">Transmembrane helix</keyword>
<keyword id="KW-0813">Transport</keyword>
<sequence length="415" mass="43966">MAIKKRSATVVPGASGAAAAVKNPQASKTSFWGELPQHVMSGISRMVPTLIMGGVILAFSQLIAYSWLKIPAEIGIMDALNSGKFSGFDLSLLKFAWLSQSFGGVLFGFAIPMFAAFVANSIGGKLAFPAGFIGGLMSTQPTQLLNFDPSTMQWATSSPVPSTFIGALIISIVAGYLVKWMNQKIQLPDFLLAFKTTFLLPILSAIFVMLAMYYVITPFGGWINGGIRTVLTAAGEKGALMYAMGIAAATAIDLGGPINKAAGFVAFSFTTDHVLPVTARSIAIVIPPIGLGLATIIDRRLTGKRLFNAQLYPQGKTAMFLAFMGISEGAIPFALESPITAIPSYMVGAIVGSTAAVWLGAVQWFPESAIWAWPLVTNLGVYMAGIALGAVITALMVVFLRLMMFRKGKLLIDSL</sequence>
<reference key="1">
    <citation type="journal article" date="1997" name="DNA Res.">
        <title>Construction of a contiguous 874-kb sequence of the Escherichia coli-K12 genome corresponding to 50.0-68.8 min on the linkage map and analysis of its sequence features.</title>
        <authorList>
            <person name="Yamamoto Y."/>
            <person name="Aiba H."/>
            <person name="Baba T."/>
            <person name="Hayashi K."/>
            <person name="Inada T."/>
            <person name="Isono K."/>
            <person name="Itoh T."/>
            <person name="Kimura S."/>
            <person name="Kitagawa M."/>
            <person name="Makino K."/>
            <person name="Miki T."/>
            <person name="Mitsuhashi N."/>
            <person name="Mizobuchi K."/>
            <person name="Mori H."/>
            <person name="Nakade S."/>
            <person name="Nakamura Y."/>
            <person name="Nashimoto H."/>
            <person name="Oshima T."/>
            <person name="Oyama S."/>
            <person name="Saito N."/>
            <person name="Sampei G."/>
            <person name="Satoh Y."/>
            <person name="Sivasundaram S."/>
            <person name="Tagami H."/>
            <person name="Takahashi H."/>
            <person name="Takeda J."/>
            <person name="Takemoto K."/>
            <person name="Uehara K."/>
            <person name="Wada C."/>
            <person name="Yamagata S."/>
            <person name="Horiuchi T."/>
        </authorList>
    </citation>
    <scope>NUCLEOTIDE SEQUENCE [LARGE SCALE GENOMIC DNA]</scope>
    <source>
        <strain>K12 / W3110 / ATCC 27325 / DSM 5911</strain>
    </source>
</reference>
<reference key="2">
    <citation type="journal article" date="1997" name="Science">
        <title>The complete genome sequence of Escherichia coli K-12.</title>
        <authorList>
            <person name="Blattner F.R."/>
            <person name="Plunkett G. III"/>
            <person name="Bloch C.A."/>
            <person name="Perna N.T."/>
            <person name="Burland V."/>
            <person name="Riley M."/>
            <person name="Collado-Vides J."/>
            <person name="Glasner J.D."/>
            <person name="Rode C.K."/>
            <person name="Mayhew G.F."/>
            <person name="Gregor J."/>
            <person name="Davis N.W."/>
            <person name="Kirkpatrick H.A."/>
            <person name="Goeden M.A."/>
            <person name="Rose D.J."/>
            <person name="Mau B."/>
            <person name="Shao Y."/>
        </authorList>
    </citation>
    <scope>NUCLEOTIDE SEQUENCE [LARGE SCALE GENOMIC DNA]</scope>
    <source>
        <strain>K12 / MG1655 / ATCC 47076</strain>
    </source>
</reference>
<reference key="3">
    <citation type="journal article" date="2006" name="Mol. Syst. Biol.">
        <title>Highly accurate genome sequences of Escherichia coli K-12 strains MG1655 and W3110.</title>
        <authorList>
            <person name="Hayashi K."/>
            <person name="Morooka N."/>
            <person name="Yamamoto Y."/>
            <person name="Fujita K."/>
            <person name="Isono K."/>
            <person name="Choi S."/>
            <person name="Ohtsubo E."/>
            <person name="Baba T."/>
            <person name="Wanner B.L."/>
            <person name="Mori H."/>
            <person name="Horiuchi T."/>
        </authorList>
    </citation>
    <scope>NUCLEOTIDE SEQUENCE [LARGE SCALE GENOMIC DNA]</scope>
    <source>
        <strain>K12 / W3110 / ATCC 27325 / DSM 5911</strain>
    </source>
</reference>
<reference key="4">
    <citation type="journal article" date="2005" name="Science">
        <title>Global topology analysis of the Escherichia coli inner membrane proteome.</title>
        <authorList>
            <person name="Daley D.O."/>
            <person name="Rapp M."/>
            <person name="Granseth E."/>
            <person name="Melen K."/>
            <person name="Drew D."/>
            <person name="von Heijne G."/>
        </authorList>
    </citation>
    <scope>TOPOLOGY [LARGE SCALE ANALYSIS]</scope>
    <source>
        <strain>K12 / MG1655 / ATCC 47076</strain>
    </source>
</reference>
<proteinExistence type="evidence at protein level"/>
<comment type="function">
    <text evidence="1">The phosphoenolpyruvate-dependent sugar phosphotransferase system (PTS), a major carbohydrate active -transport system, catalyzes the phosphorylation of incoming sugar substrates concomitant with their translocation across the cell membrane.</text>
</comment>
<comment type="subcellular location">
    <subcellularLocation>
        <location>Cell inner membrane</location>
        <topology>Multi-pass membrane protein</topology>
    </subcellularLocation>
</comment>
<comment type="domain">
    <text>The EIIC domain forms the PTS system translocation channel and contains the specific substrate-binding site.</text>
</comment>
<organism>
    <name type="scientific">Escherichia coli (strain K12)</name>
    <dbReference type="NCBI Taxonomy" id="83333"/>
    <lineage>
        <taxon>Bacteria</taxon>
        <taxon>Pseudomonadati</taxon>
        <taxon>Pseudomonadota</taxon>
        <taxon>Gammaproteobacteria</taxon>
        <taxon>Enterobacterales</taxon>
        <taxon>Enterobacteriaceae</taxon>
        <taxon>Escherichia</taxon>
    </lineage>
</organism>
<protein>
    <recommendedName>
        <fullName>Fructose-like permease IIC component 1</fullName>
    </recommendedName>
    <alternativeName>
        <fullName>PTS system fructose-like EIIC component 1</fullName>
    </alternativeName>
</protein>